<organism>
    <name type="scientific">Conus ateralbus</name>
    <name type="common">Cone snail</name>
    <dbReference type="NCBI Taxonomy" id="289019"/>
    <lineage>
        <taxon>Eukaryota</taxon>
        <taxon>Metazoa</taxon>
        <taxon>Spiralia</taxon>
        <taxon>Lophotrochozoa</taxon>
        <taxon>Mollusca</taxon>
        <taxon>Gastropoda</taxon>
        <taxon>Caenogastropoda</taxon>
        <taxon>Neogastropoda</taxon>
        <taxon>Conoidea</taxon>
        <taxon>Conidae</taxon>
        <taxon>Conus</taxon>
        <taxon>Kalloconus</taxon>
    </lineage>
</organism>
<comment type="function">
    <text evidence="2 5">Probable toxin from a worm-hunter cone snail (PubMed:31344776). Shows an excitatory activity on a majority of mouse lumbar dorsal root ganglion (DRG) neurons (PubMed:31344776). Very probably inhibits the inactivation of voltage-gated sodium channels (Nav) (Probable).</text>
</comment>
<comment type="subcellular location">
    <subcellularLocation>
        <location evidence="2">Secreted</location>
    </subcellularLocation>
</comment>
<comment type="tissue specificity">
    <text evidence="5">Expressed by the venom duct.</text>
</comment>
<comment type="domain">
    <text evidence="1">The presence of a 'disulfide through disulfide knot' structurally defines this protein as a knottin.</text>
</comment>
<comment type="domain">
    <text evidence="4">The cysteine framework is VI/VII (C-C-CC-C-C).</text>
</comment>
<comment type="mass spectrometry"/>
<comment type="similarity">
    <text evidence="4">Belongs to the conotoxin O1 superfamily.</text>
</comment>
<comment type="sequence caution" evidence="4">
    <conflict type="erroneous initiation">
        <sequence resource="EMBL-CDS" id="AZA04550"/>
    </conflict>
    <text>Extended N-terminus.</text>
</comment>
<sequence>LSKKQCGADGQFCFLPGLGLNCCSGLCLIVCVPT</sequence>
<feature type="propeptide" id="PRO_0000451990" evidence="4">
    <location>
        <begin position="1" status="less than"/>
        <end position="4"/>
    </location>
</feature>
<feature type="peptide" id="PRO_0000451991" description="Delta-conotoxin AtVIA" evidence="2">
    <location>
        <begin position="5"/>
        <end position="34"/>
    </location>
</feature>
<feature type="modified residue" description="Pyrrolidone carboxylic acid" evidence="2">
    <location>
        <position position="5"/>
    </location>
</feature>
<feature type="disulfide bond" evidence="1">
    <location>
        <begin position="6"/>
        <end position="23"/>
    </location>
</feature>
<feature type="disulfide bond" evidence="1">
    <location>
        <begin position="13"/>
        <end position="27"/>
    </location>
</feature>
<feature type="disulfide bond" evidence="1">
    <location>
        <begin position="22"/>
        <end position="31"/>
    </location>
</feature>
<feature type="mutagenesis site" description="In AtVIA[I25L;V28L;T30S]; no change in activity on mouse lumbar dorsal root ganglion neurons; when associated with L-32 and S-34." evidence="2">
    <original>I</original>
    <variation>L</variation>
    <location>
        <position position="29"/>
    </location>
</feature>
<feature type="mutagenesis site" description="In AtVIA[I25L;V28L;T30S]; no change in activity on mouse lumbar dorsal root ganglion neurons; when associated with L-29 and S-34." evidence="2">
    <original>V</original>
    <variation>L</variation>
    <location>
        <position position="32"/>
    </location>
</feature>
<feature type="mutagenesis site" description="In AtVIA[I25L;V28L;T30S]; no change in activity on mouse lumbar dorsal root ganglion neurons; when associated with L-29 and L-32." evidence="2">
    <original>T</original>
    <variation>S</variation>
    <location>
        <position position="34"/>
    </location>
</feature>
<feature type="sequence conflict" description="In Ref. 1; AZA04550." evidence="4" ref="1">
    <original>A</original>
    <variation>T</variation>
    <location>
        <position position="8"/>
    </location>
</feature>
<feature type="non-terminal residue" evidence="4">
    <location>
        <position position="1"/>
    </location>
</feature>
<keyword id="KW-0165">Cleavage on pair of basic residues</keyword>
<keyword id="KW-0903">Direct protein sequencing</keyword>
<keyword id="KW-1015">Disulfide bond</keyword>
<keyword id="KW-0872">Ion channel impairing toxin</keyword>
<keyword id="KW-0960">Knottin</keyword>
<keyword id="KW-0528">Neurotoxin</keyword>
<keyword id="KW-0873">Pyrrolidone carboxylic acid</keyword>
<keyword id="KW-0964">Secreted</keyword>
<keyword id="KW-0800">Toxin</keyword>
<keyword id="KW-0738">Voltage-gated sodium channel impairing toxin</keyword>
<evidence type="ECO:0000250" key="1">
    <source>
        <dbReference type="UniProtKB" id="P60513"/>
    </source>
</evidence>
<evidence type="ECO:0000269" key="2">
    <source>
    </source>
</evidence>
<evidence type="ECO:0000303" key="3">
    <source>
    </source>
</evidence>
<evidence type="ECO:0000305" key="4"/>
<evidence type="ECO:0000305" key="5">
    <source>
    </source>
</evidence>
<dbReference type="EMBL" id="MH025915">
    <property type="protein sequence ID" value="AZA04550.1"/>
    <property type="status" value="ALT_INIT"/>
    <property type="molecule type" value="Genomic_DNA"/>
</dbReference>
<dbReference type="SMR" id="A0A3G6IHA6"/>
<dbReference type="GO" id="GO:0005576">
    <property type="term" value="C:extracellular region"/>
    <property type="evidence" value="ECO:0007669"/>
    <property type="project" value="UniProtKB-SubCell"/>
</dbReference>
<dbReference type="GO" id="GO:0017080">
    <property type="term" value="F:sodium channel regulator activity"/>
    <property type="evidence" value="ECO:0007669"/>
    <property type="project" value="UniProtKB-KW"/>
</dbReference>
<dbReference type="GO" id="GO:0090729">
    <property type="term" value="F:toxin activity"/>
    <property type="evidence" value="ECO:0007669"/>
    <property type="project" value="UniProtKB-KW"/>
</dbReference>
<name>O16A_CONAD</name>
<reference key="1">
    <citation type="journal article" date="2019" name="Mar. Drugs">
        <title>Characterization of the first conotoxin from Conus ateralbus, a vermivorous cone snail from the Cabo Verde Archipelago.</title>
        <authorList>
            <person name="Neves J.L.B."/>
            <person name="Imperial J.S."/>
            <person name="Morgenstern D."/>
            <person name="Ueberheide B."/>
            <person name="Gajewiak J."/>
            <person name="Antunes A."/>
            <person name="Robinson S.D."/>
            <person name="Espino S."/>
            <person name="Watkins M."/>
            <person name="Vasconcelos V."/>
            <person name="Olivera B.M."/>
        </authorList>
    </citation>
    <scope>NUCLEOTIDE SEQUENCE [GENOMIC DNA]</scope>
    <scope>PROTEIN SEQUENCE</scope>
    <scope>FUNCTION</scope>
    <scope>MASS SPECTROMETRY</scope>
    <scope>PYROGLUTAMATE FORMATION AT GLN-5</scope>
    <scope>SUBCELLULAR LOCATION</scope>
    <scope>MUTAGENESIS OF ILE-29; VAL-32 AND THR-34</scope>
    <source>
        <tissue>Venom</tissue>
        <tissue>Venom duct</tissue>
    </source>
</reference>
<proteinExistence type="evidence at protein level"/>
<accession>A0A3G6IHA6</accession>
<protein>
    <recommendedName>
        <fullName evidence="3">Delta-conotoxin AtVIA</fullName>
    </recommendedName>
</protein>